<feature type="chain" id="PRO_0000382424" description="Galactooligosaccharides transport system permease protein GanP">
    <location>
        <begin position="1"/>
        <end position="418"/>
    </location>
</feature>
<feature type="transmembrane region" description="Helical" evidence="1">
    <location>
        <begin position="25"/>
        <end position="45"/>
    </location>
</feature>
<feature type="transmembrane region" description="Helical" evidence="1">
    <location>
        <begin position="65"/>
        <end position="85"/>
    </location>
</feature>
<feature type="transmembrane region" description="Helical" evidence="1">
    <location>
        <begin position="129"/>
        <end position="149"/>
    </location>
</feature>
<feature type="transmembrane region" description="Helical" evidence="1">
    <location>
        <begin position="191"/>
        <end position="211"/>
    </location>
</feature>
<feature type="transmembrane region" description="Helical" evidence="1">
    <location>
        <begin position="226"/>
        <end position="246"/>
    </location>
</feature>
<feature type="transmembrane region" description="Helical" evidence="1">
    <location>
        <begin position="279"/>
        <end position="299"/>
    </location>
</feature>
<feature type="transmembrane region" description="Helical" evidence="1">
    <location>
        <begin position="323"/>
        <end position="343"/>
    </location>
</feature>
<feature type="transmembrane region" description="Helical" evidence="1">
    <location>
        <begin position="357"/>
        <end position="379"/>
    </location>
</feature>
<feature type="transmembrane region" description="Helical" evidence="1">
    <location>
        <begin position="388"/>
        <end position="408"/>
    </location>
</feature>
<feature type="domain" description="ABC transmembrane type-1" evidence="1">
    <location>
        <begin position="187"/>
        <end position="407"/>
    </location>
</feature>
<organism>
    <name type="scientific">Bacillus subtilis (strain 168)</name>
    <dbReference type="NCBI Taxonomy" id="224308"/>
    <lineage>
        <taxon>Bacteria</taxon>
        <taxon>Bacillati</taxon>
        <taxon>Bacillota</taxon>
        <taxon>Bacilli</taxon>
        <taxon>Bacillales</taxon>
        <taxon>Bacillaceae</taxon>
        <taxon>Bacillus</taxon>
    </lineage>
</organism>
<gene>
    <name type="primary">ganP</name>
    <name type="synonym">yvfL</name>
    <name type="ordered locus">BSU34150</name>
</gene>
<keyword id="KW-1003">Cell membrane</keyword>
<keyword id="KW-0472">Membrane</keyword>
<keyword id="KW-1185">Reference proteome</keyword>
<keyword id="KW-0762">Sugar transport</keyword>
<keyword id="KW-0812">Transmembrane</keyword>
<keyword id="KW-1133">Transmembrane helix</keyword>
<keyword id="KW-0813">Transport</keyword>
<comment type="function">
    <text evidence="2 3 4 5">Involved in galactan degradation (PubMed:27501980). Part of the ABC transporter complex GanPQS involved in the uptake of galactooligosaccharides (PubMed:27501980, PubMed:29240795). Responsible for the translocation of the substrate across the membrane (Probable).</text>
</comment>
<comment type="subunit">
    <text evidence="2 3">The complex is composed of two ATP-binding proteins (MsmX), two transmembrane proteins (GanP and GanQ) and a solute-binding protein (GanS).</text>
</comment>
<comment type="subcellular location">
    <subcellularLocation>
        <location evidence="4">Cell membrane</location>
        <topology evidence="1">Multi-pass membrane protein</topology>
    </subcellularLocation>
</comment>
<comment type="induction">
    <text evidence="2">Repressed by the transcriptional regulator GanR and induced by galactobiose. Also repressed by glucose.</text>
</comment>
<comment type="similarity">
    <text evidence="4">Belongs to the binding-protein-dependent transport system permease family.</text>
</comment>
<comment type="sequence caution" evidence="4">
    <conflict type="erroneous initiation">
        <sequence resource="EMBL-CDS" id="CAB08006"/>
    </conflict>
</comment>
<proteinExistence type="evidence at protein level"/>
<reference key="1">
    <citation type="submission" date="1997-04" db="EMBL/GenBank/DDBJ databases">
        <authorList>
            <person name="Denizot F."/>
        </authorList>
    </citation>
    <scope>NUCLEOTIDE SEQUENCE [GENOMIC DNA]</scope>
</reference>
<reference key="2">
    <citation type="journal article" date="1997" name="Nature">
        <title>The complete genome sequence of the Gram-positive bacterium Bacillus subtilis.</title>
        <authorList>
            <person name="Kunst F."/>
            <person name="Ogasawara N."/>
            <person name="Moszer I."/>
            <person name="Albertini A.M."/>
            <person name="Alloni G."/>
            <person name="Azevedo V."/>
            <person name="Bertero M.G."/>
            <person name="Bessieres P."/>
            <person name="Bolotin A."/>
            <person name="Borchert S."/>
            <person name="Borriss R."/>
            <person name="Boursier L."/>
            <person name="Brans A."/>
            <person name="Braun M."/>
            <person name="Brignell S.C."/>
            <person name="Bron S."/>
            <person name="Brouillet S."/>
            <person name="Bruschi C.V."/>
            <person name="Caldwell B."/>
            <person name="Capuano V."/>
            <person name="Carter N.M."/>
            <person name="Choi S.-K."/>
            <person name="Codani J.-J."/>
            <person name="Connerton I.F."/>
            <person name="Cummings N.J."/>
            <person name="Daniel R.A."/>
            <person name="Denizot F."/>
            <person name="Devine K.M."/>
            <person name="Duesterhoeft A."/>
            <person name="Ehrlich S.D."/>
            <person name="Emmerson P.T."/>
            <person name="Entian K.-D."/>
            <person name="Errington J."/>
            <person name="Fabret C."/>
            <person name="Ferrari E."/>
            <person name="Foulger D."/>
            <person name="Fritz C."/>
            <person name="Fujita M."/>
            <person name="Fujita Y."/>
            <person name="Fuma S."/>
            <person name="Galizzi A."/>
            <person name="Galleron N."/>
            <person name="Ghim S.-Y."/>
            <person name="Glaser P."/>
            <person name="Goffeau A."/>
            <person name="Golightly E.J."/>
            <person name="Grandi G."/>
            <person name="Guiseppi G."/>
            <person name="Guy B.J."/>
            <person name="Haga K."/>
            <person name="Haiech J."/>
            <person name="Harwood C.R."/>
            <person name="Henaut A."/>
            <person name="Hilbert H."/>
            <person name="Holsappel S."/>
            <person name="Hosono S."/>
            <person name="Hullo M.-F."/>
            <person name="Itaya M."/>
            <person name="Jones L.-M."/>
            <person name="Joris B."/>
            <person name="Karamata D."/>
            <person name="Kasahara Y."/>
            <person name="Klaerr-Blanchard M."/>
            <person name="Klein C."/>
            <person name="Kobayashi Y."/>
            <person name="Koetter P."/>
            <person name="Koningstein G."/>
            <person name="Krogh S."/>
            <person name="Kumano M."/>
            <person name="Kurita K."/>
            <person name="Lapidus A."/>
            <person name="Lardinois S."/>
            <person name="Lauber J."/>
            <person name="Lazarevic V."/>
            <person name="Lee S.-M."/>
            <person name="Levine A."/>
            <person name="Liu H."/>
            <person name="Masuda S."/>
            <person name="Mauel C."/>
            <person name="Medigue C."/>
            <person name="Medina N."/>
            <person name="Mellado R.P."/>
            <person name="Mizuno M."/>
            <person name="Moestl D."/>
            <person name="Nakai S."/>
            <person name="Noback M."/>
            <person name="Noone D."/>
            <person name="O'Reilly M."/>
            <person name="Ogawa K."/>
            <person name="Ogiwara A."/>
            <person name="Oudega B."/>
            <person name="Park S.-H."/>
            <person name="Parro V."/>
            <person name="Pohl T.M."/>
            <person name="Portetelle D."/>
            <person name="Porwollik S."/>
            <person name="Prescott A.M."/>
            <person name="Presecan E."/>
            <person name="Pujic P."/>
            <person name="Purnelle B."/>
            <person name="Rapoport G."/>
            <person name="Rey M."/>
            <person name="Reynolds S."/>
            <person name="Rieger M."/>
            <person name="Rivolta C."/>
            <person name="Rocha E."/>
            <person name="Roche B."/>
            <person name="Rose M."/>
            <person name="Sadaie Y."/>
            <person name="Sato T."/>
            <person name="Scanlan E."/>
            <person name="Schleich S."/>
            <person name="Schroeter R."/>
            <person name="Scoffone F."/>
            <person name="Sekiguchi J."/>
            <person name="Sekowska A."/>
            <person name="Seror S.J."/>
            <person name="Serror P."/>
            <person name="Shin B.-S."/>
            <person name="Soldo B."/>
            <person name="Sorokin A."/>
            <person name="Tacconi E."/>
            <person name="Takagi T."/>
            <person name="Takahashi H."/>
            <person name="Takemaru K."/>
            <person name="Takeuchi M."/>
            <person name="Tamakoshi A."/>
            <person name="Tanaka T."/>
            <person name="Terpstra P."/>
            <person name="Tognoni A."/>
            <person name="Tosato V."/>
            <person name="Uchiyama S."/>
            <person name="Vandenbol M."/>
            <person name="Vannier F."/>
            <person name="Vassarotti A."/>
            <person name="Viari A."/>
            <person name="Wambutt R."/>
            <person name="Wedler E."/>
            <person name="Wedler H."/>
            <person name="Weitzenegger T."/>
            <person name="Winters P."/>
            <person name="Wipat A."/>
            <person name="Yamamoto H."/>
            <person name="Yamane K."/>
            <person name="Yasumoto K."/>
            <person name="Yata K."/>
            <person name="Yoshida K."/>
            <person name="Yoshikawa H.-F."/>
            <person name="Zumstein E."/>
            <person name="Yoshikawa H."/>
            <person name="Danchin A."/>
        </authorList>
    </citation>
    <scope>NUCLEOTIDE SEQUENCE [LARGE SCALE GENOMIC DNA]</scope>
    <source>
        <strain>168</strain>
    </source>
</reference>
<reference key="3">
    <citation type="journal article" date="2006" name="Appl. Environ. Microbiol.">
        <title>Bioinformatic, genetic, and biochemical evidence that some glycoside hydrolase family 42 beta-galactosidases are arabinogalactan type I oligomer hydrolases.</title>
        <authorList>
            <person name="Shipkowski S."/>
            <person name="Brenchley J.E."/>
        </authorList>
    </citation>
    <scope>PUTATIVE FUNCTION</scope>
</reference>
<reference key="4">
    <citation type="journal article" date="2016" name="J. Bacteriol.">
        <title>Role of the ganSPQAB operon in degradation of galactan by Bacillus subtilis.</title>
        <authorList>
            <person name="Watzlawick H."/>
            <person name="Morabbi Heravi K."/>
            <person name="Altenbuchner J."/>
        </authorList>
    </citation>
    <scope>FUNCTION</scope>
    <scope>SUBUNIT</scope>
    <scope>INDUCTION</scope>
</reference>
<reference key="5">
    <citation type="journal article" date="2017" name="PLoS ONE">
        <title>The MsmX ATPase plays a crucial role in pectin mobilization by Bacillus subtilis.</title>
        <authorList>
            <person name="Ferreira M.J."/>
            <person name="Mendes A.L."/>
            <person name="de Sa-Nogueira I."/>
        </authorList>
    </citation>
    <scope>FUNCTION</scope>
    <scope>SUBUNIT</scope>
</reference>
<accession>O32261</accession>
<accession>O07010</accession>
<sequence length="418" mass="46978">MQHRQVALLLSIIPGLGQFYNKQWIKGIVFLFLGASFFAVFGDLLNMGFWGIFTLGTEVPRDNSVFLLAEGIIAVIVTCFGLAVYYVNLRDAFQSGKQRDENKPLSSLKEQYQHIISEGYPYVVSGPSLFILIFAVIFPILFSFALAFTNYDLYHSPPAKLIDWVGFQTFANIFTVDIWRSTFFDVLAWTVVWTLAASTLQVTLGIFLAIIVNQKDLRFKRFFRTILILPWAVPGFVTILIFAGLFNDSFGAMNHDILAFFGIDPLPWMTDANWSRLALILMQGWLGFPYIFLVSTGVLQSIPDDLYEAATIDGASVFSKLRYITLPMVFIAMAPIIITQFTFNFNNFNIIYLFNGGGPAVTGSTAGGTDILVSWIYKLTMQSSQYSLAAALTILLSVFVISIALWQFRQTKSFKEEA</sequence>
<name>GANP_BACSU</name>
<evidence type="ECO:0000255" key="1">
    <source>
        <dbReference type="PROSITE-ProRule" id="PRU00441"/>
    </source>
</evidence>
<evidence type="ECO:0000269" key="2">
    <source>
    </source>
</evidence>
<evidence type="ECO:0000269" key="3">
    <source>
    </source>
</evidence>
<evidence type="ECO:0000305" key="4"/>
<evidence type="ECO:0000305" key="5">
    <source>
    </source>
</evidence>
<dbReference type="EMBL" id="Z94043">
    <property type="protein sequence ID" value="CAB08006.1"/>
    <property type="status" value="ALT_INIT"/>
    <property type="molecule type" value="Genomic_DNA"/>
</dbReference>
<dbReference type="EMBL" id="AL009126">
    <property type="protein sequence ID" value="CAB15420.1"/>
    <property type="molecule type" value="Genomic_DNA"/>
</dbReference>
<dbReference type="PIR" id="D70038">
    <property type="entry name" value="D70038"/>
</dbReference>
<dbReference type="RefSeq" id="NP_391295.1">
    <property type="nucleotide sequence ID" value="NC_000964.3"/>
</dbReference>
<dbReference type="RefSeq" id="WP_003243623.1">
    <property type="nucleotide sequence ID" value="NZ_OZ025638.1"/>
</dbReference>
<dbReference type="SMR" id="O32261"/>
<dbReference type="FunCoup" id="O32261">
    <property type="interactions" value="174"/>
</dbReference>
<dbReference type="STRING" id="224308.BSU34150"/>
<dbReference type="TCDB" id="3.A.1.1.2">
    <property type="family name" value="the atp-binding cassette (abc) superfamily"/>
</dbReference>
<dbReference type="PaxDb" id="224308-BSU34150"/>
<dbReference type="EnsemblBacteria" id="CAB15420">
    <property type="protein sequence ID" value="CAB15420"/>
    <property type="gene ID" value="BSU_34150"/>
</dbReference>
<dbReference type="GeneID" id="936323"/>
<dbReference type="KEGG" id="bsu:BSU34150"/>
<dbReference type="PATRIC" id="fig|224308.179.peg.3702"/>
<dbReference type="eggNOG" id="COG1175">
    <property type="taxonomic scope" value="Bacteria"/>
</dbReference>
<dbReference type="InParanoid" id="O32261"/>
<dbReference type="OrthoDB" id="9778687at2"/>
<dbReference type="PhylomeDB" id="O32261"/>
<dbReference type="BioCyc" id="BSUB:BSU34150-MONOMER"/>
<dbReference type="Proteomes" id="UP000001570">
    <property type="component" value="Chromosome"/>
</dbReference>
<dbReference type="GO" id="GO:1990060">
    <property type="term" value="C:maltose transport complex"/>
    <property type="evidence" value="ECO:0000318"/>
    <property type="project" value="GO_Central"/>
</dbReference>
<dbReference type="GO" id="GO:0015423">
    <property type="term" value="F:ABC-type maltose transporter activity"/>
    <property type="evidence" value="ECO:0000318"/>
    <property type="project" value="GO_Central"/>
</dbReference>
<dbReference type="GO" id="GO:0042956">
    <property type="term" value="P:maltodextrin transmembrane transport"/>
    <property type="evidence" value="ECO:0000318"/>
    <property type="project" value="GO_Central"/>
</dbReference>
<dbReference type="CDD" id="cd06261">
    <property type="entry name" value="TM_PBP2"/>
    <property type="match status" value="1"/>
</dbReference>
<dbReference type="FunFam" id="1.10.3720.10:FF:000036">
    <property type="entry name" value="Maltodextrin ABC transporter, permease protein"/>
    <property type="match status" value="1"/>
</dbReference>
<dbReference type="Gene3D" id="1.10.3720.10">
    <property type="entry name" value="MetI-like"/>
    <property type="match status" value="1"/>
</dbReference>
<dbReference type="InterPro" id="IPR000515">
    <property type="entry name" value="MetI-like"/>
</dbReference>
<dbReference type="InterPro" id="IPR035906">
    <property type="entry name" value="MetI-like_sf"/>
</dbReference>
<dbReference type="PANTHER" id="PTHR47314:SF2">
    <property type="entry name" value="GALACTOOLIGOSACCHARIDES TRANSPORT SYSTEM PERMEASE PROTEIN GANP"/>
    <property type="match status" value="1"/>
</dbReference>
<dbReference type="PANTHER" id="PTHR47314">
    <property type="entry name" value="MALTOSE/MALTODEXTRIN TRANSPORT SYSTEM PERMEASE PROTEIN MALF"/>
    <property type="match status" value="1"/>
</dbReference>
<dbReference type="Pfam" id="PF00528">
    <property type="entry name" value="BPD_transp_1"/>
    <property type="match status" value="1"/>
</dbReference>
<dbReference type="SUPFAM" id="SSF160964">
    <property type="entry name" value="MalF N-terminal region-like"/>
    <property type="match status" value="1"/>
</dbReference>
<dbReference type="SUPFAM" id="SSF161098">
    <property type="entry name" value="MetI-like"/>
    <property type="match status" value="1"/>
</dbReference>
<dbReference type="PROSITE" id="PS50928">
    <property type="entry name" value="ABC_TM1"/>
    <property type="match status" value="1"/>
</dbReference>
<protein>
    <recommendedName>
        <fullName evidence="4">Galactooligosaccharides transport system permease protein GanP</fullName>
    </recommendedName>
</protein>